<dbReference type="EC" id="6.3.2.8" evidence="1"/>
<dbReference type="EMBL" id="CP000241">
    <property type="protein sequence ID" value="ABF84673.1"/>
    <property type="molecule type" value="Genomic_DNA"/>
</dbReference>
<dbReference type="RefSeq" id="WP_000894700.1">
    <property type="nucleotide sequence ID" value="NC_008086.1"/>
</dbReference>
<dbReference type="SMR" id="Q1CTP9"/>
<dbReference type="KEGG" id="hpa:HPAG1_0606"/>
<dbReference type="HOGENOM" id="CLU_028104_2_2_7"/>
<dbReference type="UniPathway" id="UPA00219"/>
<dbReference type="GO" id="GO:0005737">
    <property type="term" value="C:cytoplasm"/>
    <property type="evidence" value="ECO:0007669"/>
    <property type="project" value="UniProtKB-SubCell"/>
</dbReference>
<dbReference type="GO" id="GO:0005524">
    <property type="term" value="F:ATP binding"/>
    <property type="evidence" value="ECO:0007669"/>
    <property type="project" value="UniProtKB-UniRule"/>
</dbReference>
<dbReference type="GO" id="GO:0008763">
    <property type="term" value="F:UDP-N-acetylmuramate-L-alanine ligase activity"/>
    <property type="evidence" value="ECO:0007669"/>
    <property type="project" value="UniProtKB-UniRule"/>
</dbReference>
<dbReference type="GO" id="GO:0051301">
    <property type="term" value="P:cell division"/>
    <property type="evidence" value="ECO:0007669"/>
    <property type="project" value="UniProtKB-KW"/>
</dbReference>
<dbReference type="GO" id="GO:0071555">
    <property type="term" value="P:cell wall organization"/>
    <property type="evidence" value="ECO:0007669"/>
    <property type="project" value="UniProtKB-KW"/>
</dbReference>
<dbReference type="GO" id="GO:0009252">
    <property type="term" value="P:peptidoglycan biosynthetic process"/>
    <property type="evidence" value="ECO:0007669"/>
    <property type="project" value="UniProtKB-UniRule"/>
</dbReference>
<dbReference type="GO" id="GO:0008360">
    <property type="term" value="P:regulation of cell shape"/>
    <property type="evidence" value="ECO:0007669"/>
    <property type="project" value="UniProtKB-KW"/>
</dbReference>
<dbReference type="Gene3D" id="3.90.190.20">
    <property type="entry name" value="Mur ligase, C-terminal domain"/>
    <property type="match status" value="1"/>
</dbReference>
<dbReference type="Gene3D" id="3.40.1190.10">
    <property type="entry name" value="Mur-like, catalytic domain"/>
    <property type="match status" value="1"/>
</dbReference>
<dbReference type="Gene3D" id="3.40.50.720">
    <property type="entry name" value="NAD(P)-binding Rossmann-like Domain"/>
    <property type="match status" value="1"/>
</dbReference>
<dbReference type="HAMAP" id="MF_00046">
    <property type="entry name" value="MurC"/>
    <property type="match status" value="1"/>
</dbReference>
<dbReference type="InterPro" id="IPR036565">
    <property type="entry name" value="Mur-like_cat_sf"/>
</dbReference>
<dbReference type="InterPro" id="IPR004101">
    <property type="entry name" value="Mur_ligase_C"/>
</dbReference>
<dbReference type="InterPro" id="IPR036615">
    <property type="entry name" value="Mur_ligase_C_dom_sf"/>
</dbReference>
<dbReference type="InterPro" id="IPR013221">
    <property type="entry name" value="Mur_ligase_cen"/>
</dbReference>
<dbReference type="InterPro" id="IPR000713">
    <property type="entry name" value="Mur_ligase_N"/>
</dbReference>
<dbReference type="InterPro" id="IPR050061">
    <property type="entry name" value="MurCDEF_pg_biosynth"/>
</dbReference>
<dbReference type="InterPro" id="IPR005758">
    <property type="entry name" value="UDP-N-AcMur_Ala_ligase_MurC"/>
</dbReference>
<dbReference type="NCBIfam" id="TIGR01082">
    <property type="entry name" value="murC"/>
    <property type="match status" value="1"/>
</dbReference>
<dbReference type="PANTHER" id="PTHR43445:SF3">
    <property type="entry name" value="UDP-N-ACETYLMURAMATE--L-ALANINE LIGASE"/>
    <property type="match status" value="1"/>
</dbReference>
<dbReference type="PANTHER" id="PTHR43445">
    <property type="entry name" value="UDP-N-ACETYLMURAMATE--L-ALANINE LIGASE-RELATED"/>
    <property type="match status" value="1"/>
</dbReference>
<dbReference type="Pfam" id="PF01225">
    <property type="entry name" value="Mur_ligase"/>
    <property type="match status" value="1"/>
</dbReference>
<dbReference type="Pfam" id="PF02875">
    <property type="entry name" value="Mur_ligase_C"/>
    <property type="match status" value="1"/>
</dbReference>
<dbReference type="Pfam" id="PF08245">
    <property type="entry name" value="Mur_ligase_M"/>
    <property type="match status" value="1"/>
</dbReference>
<dbReference type="SUPFAM" id="SSF51984">
    <property type="entry name" value="MurCD N-terminal domain"/>
    <property type="match status" value="1"/>
</dbReference>
<dbReference type="SUPFAM" id="SSF53623">
    <property type="entry name" value="MurD-like peptide ligases, catalytic domain"/>
    <property type="match status" value="1"/>
</dbReference>
<dbReference type="SUPFAM" id="SSF53244">
    <property type="entry name" value="MurD-like peptide ligases, peptide-binding domain"/>
    <property type="match status" value="1"/>
</dbReference>
<comment type="function">
    <text evidence="1">Cell wall formation.</text>
</comment>
<comment type="catalytic activity">
    <reaction evidence="1">
        <text>UDP-N-acetyl-alpha-D-muramate + L-alanine + ATP = UDP-N-acetyl-alpha-D-muramoyl-L-alanine + ADP + phosphate + H(+)</text>
        <dbReference type="Rhea" id="RHEA:23372"/>
        <dbReference type="ChEBI" id="CHEBI:15378"/>
        <dbReference type="ChEBI" id="CHEBI:30616"/>
        <dbReference type="ChEBI" id="CHEBI:43474"/>
        <dbReference type="ChEBI" id="CHEBI:57972"/>
        <dbReference type="ChEBI" id="CHEBI:70757"/>
        <dbReference type="ChEBI" id="CHEBI:83898"/>
        <dbReference type="ChEBI" id="CHEBI:456216"/>
        <dbReference type="EC" id="6.3.2.8"/>
    </reaction>
</comment>
<comment type="pathway">
    <text evidence="1">Cell wall biogenesis; peptidoglycan biosynthesis.</text>
</comment>
<comment type="subcellular location">
    <subcellularLocation>
        <location evidence="1">Cytoplasm</location>
    </subcellularLocation>
</comment>
<comment type="similarity">
    <text evidence="1">Belongs to the MurCDEF family.</text>
</comment>
<accession>Q1CTP9</accession>
<feature type="chain" id="PRO_1000004351" description="UDP-N-acetylmuramate--L-alanine ligase">
    <location>
        <begin position="1"/>
        <end position="449"/>
    </location>
</feature>
<feature type="binding site" evidence="1">
    <location>
        <begin position="121"/>
        <end position="127"/>
    </location>
    <ligand>
        <name>ATP</name>
        <dbReference type="ChEBI" id="CHEBI:30616"/>
    </ligand>
</feature>
<reference key="1">
    <citation type="journal article" date="2006" name="Proc. Natl. Acad. Sci. U.S.A.">
        <title>The complete genome sequence of a chronic atrophic gastritis Helicobacter pylori strain: evolution during disease progression.</title>
        <authorList>
            <person name="Oh J.D."/>
            <person name="Kling-Baeckhed H."/>
            <person name="Giannakis M."/>
            <person name="Xu J."/>
            <person name="Fulton R.S."/>
            <person name="Fulton L.A."/>
            <person name="Cordum H.S."/>
            <person name="Wang C."/>
            <person name="Elliott G."/>
            <person name="Edwards J."/>
            <person name="Mardis E.R."/>
            <person name="Engstrand L.G."/>
            <person name="Gordon J.I."/>
        </authorList>
    </citation>
    <scope>NUCLEOTIDE SEQUENCE [LARGE SCALE GENOMIC DNA]</scope>
    <source>
        <strain>HPAG1</strain>
    </source>
</reference>
<keyword id="KW-0067">ATP-binding</keyword>
<keyword id="KW-0131">Cell cycle</keyword>
<keyword id="KW-0132">Cell division</keyword>
<keyword id="KW-0133">Cell shape</keyword>
<keyword id="KW-0961">Cell wall biogenesis/degradation</keyword>
<keyword id="KW-0963">Cytoplasm</keyword>
<keyword id="KW-0436">Ligase</keyword>
<keyword id="KW-0547">Nucleotide-binding</keyword>
<keyword id="KW-0573">Peptidoglycan synthesis</keyword>
<proteinExistence type="inferred from homology"/>
<evidence type="ECO:0000255" key="1">
    <source>
        <dbReference type="HAMAP-Rule" id="MF_00046"/>
    </source>
</evidence>
<organism>
    <name type="scientific">Helicobacter pylori (strain HPAG1)</name>
    <dbReference type="NCBI Taxonomy" id="357544"/>
    <lineage>
        <taxon>Bacteria</taxon>
        <taxon>Pseudomonadati</taxon>
        <taxon>Campylobacterota</taxon>
        <taxon>Epsilonproteobacteria</taxon>
        <taxon>Campylobacterales</taxon>
        <taxon>Helicobacteraceae</taxon>
        <taxon>Helicobacter</taxon>
    </lineage>
</organism>
<sequence>MLETPKVLLKNLQDCKIHFIGIGGIGISGLAKYLKAQGAKISGSDIAISPSVKYLKALGVEINIPHDPKAINHQDVIIHSAIIKEDNKEIQRAKELKIPILSRKDALYSILKDKRVFSVCGAHGKSSITAMLSAICPFFGAIIGAHSKEFDSNVRESANDSLVFEADESDSSFLFSNPYAAIVPNTEPEHLEHYGHDLERFFFAYEYFLDHAQKRVIYKEDPFLKSYSKDAIVLEKKDIYNIQYILKDGEPYTSFELKDLGAFLVWGLGEHNATNASLAILSALDELNLEEIRNNLLNFKGIKKRFDILQKNALILIDDYAHHPTEISATLKSARIYANLLDTQEQIIVIWQAHKYSRLMDNLEEFKKCFLEHCDRLIILPVYSASEVKRDIDLKTHFKHYNPTFIDRVRKKGDFLELLVNDNVVETIEKGFVIGFGAGDITYQLRGEM</sequence>
<gene>
    <name evidence="1" type="primary">murC</name>
    <name type="ordered locus">HPAG1_0606</name>
</gene>
<protein>
    <recommendedName>
        <fullName evidence="1">UDP-N-acetylmuramate--L-alanine ligase</fullName>
        <ecNumber evidence="1">6.3.2.8</ecNumber>
    </recommendedName>
    <alternativeName>
        <fullName evidence="1">UDP-N-acetylmuramoyl-L-alanine synthetase</fullName>
    </alternativeName>
</protein>
<name>MURC_HELPH</name>